<dbReference type="EMBL" id="U14180">
    <property type="protein sequence ID" value="AAC46514.1"/>
    <property type="molecule type" value="Genomic_DNA"/>
</dbReference>
<dbReference type="SMR" id="P52962"/>
<dbReference type="OrthoDB" id="6018897at2759"/>
<dbReference type="GO" id="GO:0042995">
    <property type="term" value="C:cell projection"/>
    <property type="evidence" value="ECO:0007669"/>
    <property type="project" value="UniProtKB-SubCell"/>
</dbReference>
<dbReference type="GO" id="GO:0005737">
    <property type="term" value="C:cytoplasm"/>
    <property type="evidence" value="ECO:0007669"/>
    <property type="project" value="UniProtKB-KW"/>
</dbReference>
<dbReference type="GO" id="GO:0005856">
    <property type="term" value="C:cytoskeleton"/>
    <property type="evidence" value="ECO:0007669"/>
    <property type="project" value="UniProtKB-SubCell"/>
</dbReference>
<dbReference type="GO" id="GO:0005886">
    <property type="term" value="C:plasma membrane"/>
    <property type="evidence" value="ECO:0007669"/>
    <property type="project" value="UniProtKB-SubCell"/>
</dbReference>
<dbReference type="GO" id="GO:0003779">
    <property type="term" value="F:actin binding"/>
    <property type="evidence" value="ECO:0007669"/>
    <property type="project" value="InterPro"/>
</dbReference>
<dbReference type="CDD" id="cd14473">
    <property type="entry name" value="FERM_B-lobe"/>
    <property type="match status" value="1"/>
</dbReference>
<dbReference type="CDD" id="cd13194">
    <property type="entry name" value="FERM_C_ERM"/>
    <property type="match status" value="1"/>
</dbReference>
<dbReference type="CDD" id="cd17187">
    <property type="entry name" value="FERM_F1_ERM"/>
    <property type="match status" value="1"/>
</dbReference>
<dbReference type="FunFam" id="2.30.29.30:FF:000003">
    <property type="entry name" value="Radixin isoform 1"/>
    <property type="match status" value="1"/>
</dbReference>
<dbReference type="FunFam" id="1.20.80.10:FF:000002">
    <property type="entry name" value="radixin isoform X1"/>
    <property type="match status" value="1"/>
</dbReference>
<dbReference type="FunFam" id="3.10.20.90:FF:000013">
    <property type="entry name" value="radixin isoform X1"/>
    <property type="match status" value="1"/>
</dbReference>
<dbReference type="Gene3D" id="1.20.5.450">
    <property type="match status" value="1"/>
</dbReference>
<dbReference type="Gene3D" id="1.20.80.10">
    <property type="match status" value="1"/>
</dbReference>
<dbReference type="Gene3D" id="6.10.360.10">
    <property type="match status" value="1"/>
</dbReference>
<dbReference type="Gene3D" id="3.10.20.90">
    <property type="entry name" value="Phosphatidylinositol 3-kinase Catalytic Subunit, Chain A, domain 1"/>
    <property type="match status" value="1"/>
</dbReference>
<dbReference type="Gene3D" id="2.30.29.30">
    <property type="entry name" value="Pleckstrin-homology domain (PH domain)/Phosphotyrosine-binding domain (PTB)"/>
    <property type="match status" value="1"/>
</dbReference>
<dbReference type="InterPro" id="IPR019749">
    <property type="entry name" value="Band_41_domain"/>
</dbReference>
<dbReference type="InterPro" id="IPR011174">
    <property type="entry name" value="ERM"/>
</dbReference>
<dbReference type="InterPro" id="IPR011259">
    <property type="entry name" value="ERM_C_dom"/>
</dbReference>
<dbReference type="InterPro" id="IPR041789">
    <property type="entry name" value="ERM_FERM_C"/>
</dbReference>
<dbReference type="InterPro" id="IPR000798">
    <property type="entry name" value="Ez/rad/moesin-like"/>
</dbReference>
<dbReference type="InterPro" id="IPR014352">
    <property type="entry name" value="FERM/acyl-CoA-bd_prot_sf"/>
</dbReference>
<dbReference type="InterPro" id="IPR035963">
    <property type="entry name" value="FERM_2"/>
</dbReference>
<dbReference type="InterPro" id="IPR019748">
    <property type="entry name" value="FERM_central"/>
</dbReference>
<dbReference type="InterPro" id="IPR019747">
    <property type="entry name" value="FERM_CS"/>
</dbReference>
<dbReference type="InterPro" id="IPR000299">
    <property type="entry name" value="FERM_domain"/>
</dbReference>
<dbReference type="InterPro" id="IPR018979">
    <property type="entry name" value="FERM_N"/>
</dbReference>
<dbReference type="InterPro" id="IPR018980">
    <property type="entry name" value="FERM_PH-like_C"/>
</dbReference>
<dbReference type="InterPro" id="IPR008954">
    <property type="entry name" value="Moesin_tail_sf"/>
</dbReference>
<dbReference type="InterPro" id="IPR011993">
    <property type="entry name" value="PH-like_dom_sf"/>
</dbReference>
<dbReference type="InterPro" id="IPR029071">
    <property type="entry name" value="Ubiquitin-like_domsf"/>
</dbReference>
<dbReference type="PANTHER" id="PTHR23281">
    <property type="entry name" value="MERLIN/MOESIN/EZRIN/RADIXIN"/>
    <property type="match status" value="1"/>
</dbReference>
<dbReference type="Pfam" id="PF00769">
    <property type="entry name" value="ERM_C"/>
    <property type="match status" value="1"/>
</dbReference>
<dbReference type="Pfam" id="PF09380">
    <property type="entry name" value="FERM_C"/>
    <property type="match status" value="1"/>
</dbReference>
<dbReference type="Pfam" id="PF00373">
    <property type="entry name" value="FERM_M"/>
    <property type="match status" value="1"/>
</dbReference>
<dbReference type="Pfam" id="PF09379">
    <property type="entry name" value="FERM_N"/>
    <property type="match status" value="1"/>
</dbReference>
<dbReference type="PIRSF" id="PIRSF002305">
    <property type="entry name" value="ERM"/>
    <property type="match status" value="1"/>
</dbReference>
<dbReference type="PRINTS" id="PR00935">
    <property type="entry name" value="BAND41"/>
</dbReference>
<dbReference type="PRINTS" id="PR00661">
    <property type="entry name" value="ERMFAMILY"/>
</dbReference>
<dbReference type="SMART" id="SM00295">
    <property type="entry name" value="B41"/>
    <property type="match status" value="1"/>
</dbReference>
<dbReference type="SMART" id="SM01196">
    <property type="entry name" value="FERM_C"/>
    <property type="match status" value="1"/>
</dbReference>
<dbReference type="SUPFAM" id="SSF48678">
    <property type="entry name" value="Moesin tail domain"/>
    <property type="match status" value="1"/>
</dbReference>
<dbReference type="SUPFAM" id="SSF50729">
    <property type="entry name" value="PH domain-like"/>
    <property type="match status" value="1"/>
</dbReference>
<dbReference type="SUPFAM" id="SSF47031">
    <property type="entry name" value="Second domain of FERM"/>
    <property type="match status" value="1"/>
</dbReference>
<dbReference type="SUPFAM" id="SSF54236">
    <property type="entry name" value="Ubiquitin-like"/>
    <property type="match status" value="1"/>
</dbReference>
<dbReference type="PROSITE" id="PS00660">
    <property type="entry name" value="FERM_1"/>
    <property type="match status" value="1"/>
</dbReference>
<dbReference type="PROSITE" id="PS00661">
    <property type="entry name" value="FERM_2"/>
    <property type="match status" value="1"/>
</dbReference>
<dbReference type="PROSITE" id="PS50057">
    <property type="entry name" value="FERM_3"/>
    <property type="match status" value="1"/>
</dbReference>
<feature type="chain" id="PRO_0000219420" description="Moesin">
    <location>
        <begin position="1"/>
        <end position="572"/>
    </location>
</feature>
<feature type="domain" description="FERM" evidence="2">
    <location>
        <begin position="1"/>
        <end position="294"/>
    </location>
</feature>
<feature type="region of interest" description="Disordered" evidence="3">
    <location>
        <begin position="444"/>
        <end position="508"/>
    </location>
</feature>
<feature type="region of interest" description="Disordered" evidence="3">
    <location>
        <begin position="523"/>
        <end position="544"/>
    </location>
</feature>
<feature type="compositionally biased region" description="Low complexity" evidence="3">
    <location>
        <begin position="454"/>
        <end position="475"/>
    </location>
</feature>
<feature type="compositionally biased region" description="Acidic residues" evidence="3">
    <location>
        <begin position="480"/>
        <end position="502"/>
    </location>
</feature>
<feature type="compositionally biased region" description="Basic and acidic residues" evidence="3">
    <location>
        <begin position="525"/>
        <end position="544"/>
    </location>
</feature>
<evidence type="ECO:0000250" key="1"/>
<evidence type="ECO:0000255" key="2">
    <source>
        <dbReference type="PROSITE-ProRule" id="PRU00084"/>
    </source>
</evidence>
<evidence type="ECO:0000256" key="3">
    <source>
        <dbReference type="SAM" id="MobiDB-lite"/>
    </source>
</evidence>
<protein>
    <recommendedName>
        <fullName>Moesin</fullName>
    </recommendedName>
</protein>
<organism>
    <name type="scientific">Lytechinus variegatus</name>
    <name type="common">Green sea urchin</name>
    <name type="synonym">Echinus variegatus</name>
    <dbReference type="NCBI Taxonomy" id="7654"/>
    <lineage>
        <taxon>Eukaryota</taxon>
        <taxon>Metazoa</taxon>
        <taxon>Echinodermata</taxon>
        <taxon>Eleutherozoa</taxon>
        <taxon>Echinozoa</taxon>
        <taxon>Echinoidea</taxon>
        <taxon>Euechinoidea</taxon>
        <taxon>Echinacea</taxon>
        <taxon>Temnopleuroida</taxon>
        <taxon>Toxopneustidae</taxon>
        <taxon>Lytechinus</taxon>
    </lineage>
</organism>
<proteinExistence type="inferred from homology"/>
<name>MOES_LYTVA</name>
<comment type="function">
    <text>Probably involved in connections of major cytoskeletal structures to the plasma membrane.</text>
</comment>
<comment type="subcellular location">
    <subcellularLocation>
        <location evidence="1">Cell membrane</location>
        <topology evidence="1">Peripheral membrane protein</topology>
        <orientation evidence="1">Cytoplasmic side</orientation>
    </subcellularLocation>
    <subcellularLocation>
        <location evidence="1">Cytoplasm</location>
        <location evidence="1">Cytoskeleton</location>
    </subcellularLocation>
    <subcellularLocation>
        <location evidence="1">Cell projection</location>
    </subcellularLocation>
</comment>
<accession>P52962</accession>
<sequence>MPRGVAVRVTTMDAELEFAIQPNTTGKQLFDQVVKTIGLREIWFFGLQYIDSKGLVTWLKLNKKVVAQDLRKDNPLQFKFRVKFYPEEVTEELIQEITQRLFFLQIKEGILSDEVYCPPETSVLLASYAAQAKYGPHSASTKARLTEDTNILPKRVIEQHKMTKEQWYERVSNWHQEHLSLSKEDAITEYMKIAQDLEMYGVNYFEIRNKKGTDLWLGVDALGLNVYEKDDKLTPKIGFPWSEIRNISFNDKKFVIKPIEKKAPDFVFYASRLRINKRILALCMGNHELYMRRRKPDTIEVQQMKAQAKEEKQAKKLEREQLAIEMKKRQETEEKYKRLQQQIREKELAEEKNREDLKRWEEESRAMQEKLKQQQMESEEYQSKVAAMEMQMNEATLEREMTAQEKEEMRARVEALAEEKARLEQSREESLKESAEFAEKLRLSQERERELQEAQEAAAAQHAAQLAAQREAQQLIPKDEGEEDEQDHELEVQQDDNDDLDDKESYLPDKHLLDKLQKLQSELQAMKDESKGEDRYDKIHQENIRAGRDKYQTLRNIRSGNTRQRIDTFENI</sequence>
<keyword id="KW-1003">Cell membrane</keyword>
<keyword id="KW-0966">Cell projection</keyword>
<keyword id="KW-0963">Cytoplasm</keyword>
<keyword id="KW-0206">Cytoskeleton</keyword>
<keyword id="KW-0472">Membrane</keyword>
<reference key="1">
    <citation type="journal article" date="1995" name="J. Cell Sci.">
        <title>Characterization of moesin in the sea urchin Lytechinus variegatus: redistribution to the plasma membrane following fertilization is inhibited by cytochalasin B.</title>
        <authorList>
            <person name="Bachman E.S."/>
            <person name="McClay D.R."/>
        </authorList>
    </citation>
    <scope>NUCLEOTIDE SEQUENCE [GENOMIC DNA]</scope>
</reference>